<name>RL11_STAAM</name>
<sequence length="140" mass="14874">MAKKVDKVVKLQIPAGKANPAPPVGPALGQAGVNIMGFCKEFNARTQDQAGLIIPVEISVYEDRSFTFITKTPPAPVLLKKAAGIEKGSGEPNKTKVATVTKDQVREIANSKMQDLNAADEEAAMRIIEGTARSMGIVVE</sequence>
<dbReference type="EMBL" id="BA000017">
    <property type="protein sequence ID" value="BAB56699.1"/>
    <property type="molecule type" value="Genomic_DNA"/>
</dbReference>
<dbReference type="RefSeq" id="WP_001085792.1">
    <property type="nucleotide sequence ID" value="NC_002758.2"/>
</dbReference>
<dbReference type="SMR" id="P0A0F1"/>
<dbReference type="GeneID" id="98344871"/>
<dbReference type="KEGG" id="sav:SAV0537"/>
<dbReference type="HOGENOM" id="CLU_074237_2_1_9"/>
<dbReference type="PhylomeDB" id="P0A0F1"/>
<dbReference type="Proteomes" id="UP000002481">
    <property type="component" value="Chromosome"/>
</dbReference>
<dbReference type="GO" id="GO:0022625">
    <property type="term" value="C:cytosolic large ribosomal subunit"/>
    <property type="evidence" value="ECO:0007669"/>
    <property type="project" value="TreeGrafter"/>
</dbReference>
<dbReference type="GO" id="GO:0070180">
    <property type="term" value="F:large ribosomal subunit rRNA binding"/>
    <property type="evidence" value="ECO:0007669"/>
    <property type="project" value="UniProtKB-UniRule"/>
</dbReference>
<dbReference type="GO" id="GO:0003735">
    <property type="term" value="F:structural constituent of ribosome"/>
    <property type="evidence" value="ECO:0007669"/>
    <property type="project" value="InterPro"/>
</dbReference>
<dbReference type="GO" id="GO:0006412">
    <property type="term" value="P:translation"/>
    <property type="evidence" value="ECO:0007669"/>
    <property type="project" value="UniProtKB-UniRule"/>
</dbReference>
<dbReference type="CDD" id="cd00349">
    <property type="entry name" value="Ribosomal_L11"/>
    <property type="match status" value="1"/>
</dbReference>
<dbReference type="FunFam" id="1.10.10.250:FF:000001">
    <property type="entry name" value="50S ribosomal protein L11"/>
    <property type="match status" value="1"/>
</dbReference>
<dbReference type="FunFam" id="3.30.1550.10:FF:000001">
    <property type="entry name" value="50S ribosomal protein L11"/>
    <property type="match status" value="1"/>
</dbReference>
<dbReference type="Gene3D" id="1.10.10.250">
    <property type="entry name" value="Ribosomal protein L11, C-terminal domain"/>
    <property type="match status" value="1"/>
</dbReference>
<dbReference type="Gene3D" id="3.30.1550.10">
    <property type="entry name" value="Ribosomal protein L11/L12, N-terminal domain"/>
    <property type="match status" value="1"/>
</dbReference>
<dbReference type="HAMAP" id="MF_00736">
    <property type="entry name" value="Ribosomal_uL11"/>
    <property type="match status" value="1"/>
</dbReference>
<dbReference type="InterPro" id="IPR000911">
    <property type="entry name" value="Ribosomal_uL11"/>
</dbReference>
<dbReference type="InterPro" id="IPR006519">
    <property type="entry name" value="Ribosomal_uL11_bac-typ"/>
</dbReference>
<dbReference type="InterPro" id="IPR020783">
    <property type="entry name" value="Ribosomal_uL11_C"/>
</dbReference>
<dbReference type="InterPro" id="IPR036769">
    <property type="entry name" value="Ribosomal_uL11_C_sf"/>
</dbReference>
<dbReference type="InterPro" id="IPR020785">
    <property type="entry name" value="Ribosomal_uL11_CS"/>
</dbReference>
<dbReference type="InterPro" id="IPR020784">
    <property type="entry name" value="Ribosomal_uL11_N"/>
</dbReference>
<dbReference type="InterPro" id="IPR036796">
    <property type="entry name" value="Ribosomal_uL11_N_sf"/>
</dbReference>
<dbReference type="NCBIfam" id="TIGR01632">
    <property type="entry name" value="L11_bact"/>
    <property type="match status" value="1"/>
</dbReference>
<dbReference type="PANTHER" id="PTHR11661">
    <property type="entry name" value="60S RIBOSOMAL PROTEIN L12"/>
    <property type="match status" value="1"/>
</dbReference>
<dbReference type="PANTHER" id="PTHR11661:SF1">
    <property type="entry name" value="LARGE RIBOSOMAL SUBUNIT PROTEIN UL11M"/>
    <property type="match status" value="1"/>
</dbReference>
<dbReference type="Pfam" id="PF00298">
    <property type="entry name" value="Ribosomal_L11"/>
    <property type="match status" value="1"/>
</dbReference>
<dbReference type="Pfam" id="PF03946">
    <property type="entry name" value="Ribosomal_L11_N"/>
    <property type="match status" value="1"/>
</dbReference>
<dbReference type="SMART" id="SM00649">
    <property type="entry name" value="RL11"/>
    <property type="match status" value="1"/>
</dbReference>
<dbReference type="SUPFAM" id="SSF54747">
    <property type="entry name" value="Ribosomal L11/L12e N-terminal domain"/>
    <property type="match status" value="1"/>
</dbReference>
<dbReference type="SUPFAM" id="SSF46906">
    <property type="entry name" value="Ribosomal protein L11, C-terminal domain"/>
    <property type="match status" value="1"/>
</dbReference>
<dbReference type="PROSITE" id="PS00359">
    <property type="entry name" value="RIBOSOMAL_L11"/>
    <property type="match status" value="1"/>
</dbReference>
<comment type="function">
    <text evidence="2">Forms part of the ribosomal stalk which helps the ribosome interact with GTP-bound translation factors.</text>
</comment>
<comment type="subunit">
    <text evidence="2">Part of the ribosomal stalk of the 50S ribosomal subunit. Interacts with L10 and the large rRNA to form the base of the stalk. L10 forms an elongated spine to which L12 dimers bind in a sequential fashion forming a multimeric L10(L12)X complex.</text>
</comment>
<comment type="PTM">
    <text evidence="2">One or more lysine residues are methylated.</text>
</comment>
<comment type="similarity">
    <text evidence="2">Belongs to the universal ribosomal protein uL11 family.</text>
</comment>
<feature type="initiator methionine" description="Removed" evidence="1">
    <location>
        <position position="1"/>
    </location>
</feature>
<feature type="chain" id="PRO_0000104361" description="Large ribosomal subunit protein uL11">
    <location>
        <begin position="2"/>
        <end position="140"/>
    </location>
</feature>
<keyword id="KW-0488">Methylation</keyword>
<keyword id="KW-0687">Ribonucleoprotein</keyword>
<keyword id="KW-0689">Ribosomal protein</keyword>
<keyword id="KW-0694">RNA-binding</keyword>
<keyword id="KW-0699">rRNA-binding</keyword>
<protein>
    <recommendedName>
        <fullName evidence="2">Large ribosomal subunit protein uL11</fullName>
    </recommendedName>
    <alternativeName>
        <fullName evidence="3">50S ribosomal protein L11</fullName>
    </alternativeName>
</protein>
<proteinExistence type="inferred from homology"/>
<evidence type="ECO:0000250" key="1"/>
<evidence type="ECO:0000255" key="2">
    <source>
        <dbReference type="HAMAP-Rule" id="MF_00736"/>
    </source>
</evidence>
<evidence type="ECO:0000305" key="3"/>
<accession>P0A0F1</accession>
<accession>O06443</accession>
<gene>
    <name evidence="2" type="primary">rplK</name>
    <name type="ordered locus">SAV0537</name>
</gene>
<reference key="1">
    <citation type="journal article" date="2001" name="Lancet">
        <title>Whole genome sequencing of meticillin-resistant Staphylococcus aureus.</title>
        <authorList>
            <person name="Kuroda M."/>
            <person name="Ohta T."/>
            <person name="Uchiyama I."/>
            <person name="Baba T."/>
            <person name="Yuzawa H."/>
            <person name="Kobayashi I."/>
            <person name="Cui L."/>
            <person name="Oguchi A."/>
            <person name="Aoki K."/>
            <person name="Nagai Y."/>
            <person name="Lian J.-Q."/>
            <person name="Ito T."/>
            <person name="Kanamori M."/>
            <person name="Matsumaru H."/>
            <person name="Maruyama A."/>
            <person name="Murakami H."/>
            <person name="Hosoyama A."/>
            <person name="Mizutani-Ui Y."/>
            <person name="Takahashi N.K."/>
            <person name="Sawano T."/>
            <person name="Inoue R."/>
            <person name="Kaito C."/>
            <person name="Sekimizu K."/>
            <person name="Hirakawa H."/>
            <person name="Kuhara S."/>
            <person name="Goto S."/>
            <person name="Yabuzaki J."/>
            <person name="Kanehisa M."/>
            <person name="Yamashita A."/>
            <person name="Oshima K."/>
            <person name="Furuya K."/>
            <person name="Yoshino C."/>
            <person name="Shiba T."/>
            <person name="Hattori M."/>
            <person name="Ogasawara N."/>
            <person name="Hayashi H."/>
            <person name="Hiramatsu K."/>
        </authorList>
    </citation>
    <scope>NUCLEOTIDE SEQUENCE [LARGE SCALE GENOMIC DNA]</scope>
    <source>
        <strain>Mu50 / ATCC 700699</strain>
    </source>
</reference>
<organism>
    <name type="scientific">Staphylococcus aureus (strain Mu50 / ATCC 700699)</name>
    <dbReference type="NCBI Taxonomy" id="158878"/>
    <lineage>
        <taxon>Bacteria</taxon>
        <taxon>Bacillati</taxon>
        <taxon>Bacillota</taxon>
        <taxon>Bacilli</taxon>
        <taxon>Bacillales</taxon>
        <taxon>Staphylococcaceae</taxon>
        <taxon>Staphylococcus</taxon>
    </lineage>
</organism>